<keyword id="KW-0963">Cytoplasm</keyword>
<keyword id="KW-0378">Hydrolase</keyword>
<keyword id="KW-0719">Serine esterase</keyword>
<protein>
    <recommendedName>
        <fullName evidence="2">Acetyl esterase</fullName>
        <ecNumber evidence="2">3.1.1.-</ecNumber>
    </recommendedName>
</protein>
<name>AES_ECOHS</name>
<reference key="1">
    <citation type="journal article" date="2008" name="J. Bacteriol.">
        <title>The pangenome structure of Escherichia coli: comparative genomic analysis of E. coli commensal and pathogenic isolates.</title>
        <authorList>
            <person name="Rasko D.A."/>
            <person name="Rosovitz M.J."/>
            <person name="Myers G.S.A."/>
            <person name="Mongodin E.F."/>
            <person name="Fricke W.F."/>
            <person name="Gajer P."/>
            <person name="Crabtree J."/>
            <person name="Sebaihia M."/>
            <person name="Thomson N.R."/>
            <person name="Chaudhuri R."/>
            <person name="Henderson I.R."/>
            <person name="Sperandio V."/>
            <person name="Ravel J."/>
        </authorList>
    </citation>
    <scope>NUCLEOTIDE SEQUENCE [LARGE SCALE GENOMIC DNA]</scope>
    <source>
        <strain>HS</strain>
    </source>
</reference>
<organism>
    <name type="scientific">Escherichia coli O9:H4 (strain HS)</name>
    <dbReference type="NCBI Taxonomy" id="331112"/>
    <lineage>
        <taxon>Bacteria</taxon>
        <taxon>Pseudomonadati</taxon>
        <taxon>Pseudomonadota</taxon>
        <taxon>Gammaproteobacteria</taxon>
        <taxon>Enterobacterales</taxon>
        <taxon>Enterobacteriaceae</taxon>
        <taxon>Escherichia</taxon>
    </lineage>
</organism>
<accession>A7ZXD4</accession>
<gene>
    <name evidence="2" type="primary">aes</name>
    <name type="ordered locus">EcHS_A0553</name>
</gene>
<sequence length="319" mass="35950">MKPENKSPVLDLISAGMKTVVNTLQPDLPPWPATGTIAEQRQYYTLERRFWNAGAPEMATRAYMVPTKYGQVETRLFCPQPDSPATLFYLHGGGFILGNLDTHDRIMRLLASYSQCTVIGIDYTLSPEARFPQAIEEIVAACCYFHQQAEDYQINMSRIGFAGDSAGAMLALASALWLRDKQIDCGKIAGVLLWYGLYGLRDSVTRRLLGGVWDGLTQQDLQMYEEAYLSNDADRESPYYCLFNNDLTREVPPCFIAGAEFDPLLDDSRLLYQTLAAHQQPCEFKLYPGTLHAFLHYSRMMKTADEALRDGAQFFTAQL</sequence>
<feature type="chain" id="PRO_1000070797" description="Acetyl esterase">
    <location>
        <begin position="1"/>
        <end position="319"/>
    </location>
</feature>
<feature type="short sequence motif" description="Involved in the stabilization of the negatively charged intermediate by the formation of the oxyanion hole" evidence="1">
    <location>
        <begin position="91"/>
        <end position="93"/>
    </location>
</feature>
<feature type="active site" evidence="2">
    <location>
        <position position="165"/>
    </location>
</feature>
<feature type="active site" evidence="2">
    <location>
        <position position="262"/>
    </location>
</feature>
<feature type="active site" evidence="2">
    <location>
        <position position="292"/>
    </location>
</feature>
<evidence type="ECO:0000250" key="1">
    <source>
        <dbReference type="UniProtKB" id="Q5NUF3"/>
    </source>
</evidence>
<evidence type="ECO:0000255" key="2">
    <source>
        <dbReference type="HAMAP-Rule" id="MF_01958"/>
    </source>
</evidence>
<proteinExistence type="inferred from homology"/>
<comment type="function">
    <text evidence="2">Displays esterase activity towards short chain fatty esters (acyl chain length of up to 8 carbons). Able to hydrolyze triacetylglycerol (triacetin) and tributyrylglycerol (tributyrin), but not trioleylglycerol (triolein) or cholesterol oleate. Negatively regulates MalT activity by antagonizing maltotriose binding. Inhibits MelA galactosidase activity.</text>
</comment>
<comment type="subunit">
    <text evidence="2">Homodimer. Interacts with MalT and MelA.</text>
</comment>
<comment type="subcellular location">
    <subcellularLocation>
        <location evidence="2">Cytoplasm</location>
    </subcellularLocation>
</comment>
<comment type="similarity">
    <text evidence="2">Belongs to the 'GDXG' lipolytic enzyme family.</text>
</comment>
<dbReference type="EC" id="3.1.1.-" evidence="2"/>
<dbReference type="EMBL" id="CP000802">
    <property type="protein sequence ID" value="ABV04938.1"/>
    <property type="molecule type" value="Genomic_DNA"/>
</dbReference>
<dbReference type="RefSeq" id="WP_000801865.1">
    <property type="nucleotide sequence ID" value="NC_009800.1"/>
</dbReference>
<dbReference type="SMR" id="A7ZXD4"/>
<dbReference type="ESTHER" id="ecoli-Aes">
    <property type="family name" value="Acetyl_esterase"/>
</dbReference>
<dbReference type="MEROPS" id="S09.A47"/>
<dbReference type="KEGG" id="ecx:EcHS_A0553"/>
<dbReference type="HOGENOM" id="CLU_012494_6_4_6"/>
<dbReference type="GO" id="GO:0005737">
    <property type="term" value="C:cytoplasm"/>
    <property type="evidence" value="ECO:0007669"/>
    <property type="project" value="UniProtKB-SubCell"/>
</dbReference>
<dbReference type="GO" id="GO:0052689">
    <property type="term" value="F:carboxylic ester hydrolase activity"/>
    <property type="evidence" value="ECO:0007669"/>
    <property type="project" value="UniProtKB-UniRule"/>
</dbReference>
<dbReference type="FunFam" id="3.40.50.1820:FF:000035">
    <property type="entry name" value="Acetyl esterase"/>
    <property type="match status" value="1"/>
</dbReference>
<dbReference type="Gene3D" id="3.40.50.1820">
    <property type="entry name" value="alpha/beta hydrolase"/>
    <property type="match status" value="1"/>
</dbReference>
<dbReference type="HAMAP" id="MF_01958">
    <property type="entry name" value="Acetyl_esterase"/>
    <property type="match status" value="1"/>
</dbReference>
<dbReference type="InterPro" id="IPR013094">
    <property type="entry name" value="AB_hydrolase_3"/>
</dbReference>
<dbReference type="InterPro" id="IPR029058">
    <property type="entry name" value="AB_hydrolase_fold"/>
</dbReference>
<dbReference type="InterPro" id="IPR023508">
    <property type="entry name" value="Acetyl_esterase"/>
</dbReference>
<dbReference type="InterPro" id="IPR050300">
    <property type="entry name" value="GDXG_lipolytic_enzyme"/>
</dbReference>
<dbReference type="InterPro" id="IPR002168">
    <property type="entry name" value="Lipase_GDXG_HIS_AS"/>
</dbReference>
<dbReference type="InterPro" id="IPR033140">
    <property type="entry name" value="Lipase_GDXG_put_SER_AS"/>
</dbReference>
<dbReference type="NCBIfam" id="NF007547">
    <property type="entry name" value="PRK10162.1"/>
    <property type="match status" value="1"/>
</dbReference>
<dbReference type="PANTHER" id="PTHR48081">
    <property type="entry name" value="AB HYDROLASE SUPERFAMILY PROTEIN C4A8.06C"/>
    <property type="match status" value="1"/>
</dbReference>
<dbReference type="PANTHER" id="PTHR48081:SF8">
    <property type="entry name" value="ALPHA_BETA HYDROLASE FOLD-3 DOMAIN-CONTAINING PROTEIN-RELATED"/>
    <property type="match status" value="1"/>
</dbReference>
<dbReference type="Pfam" id="PF07859">
    <property type="entry name" value="Abhydrolase_3"/>
    <property type="match status" value="1"/>
</dbReference>
<dbReference type="SUPFAM" id="SSF53474">
    <property type="entry name" value="alpha/beta-Hydrolases"/>
    <property type="match status" value="1"/>
</dbReference>
<dbReference type="PROSITE" id="PS01173">
    <property type="entry name" value="LIPASE_GDXG_HIS"/>
    <property type="match status" value="1"/>
</dbReference>
<dbReference type="PROSITE" id="PS01174">
    <property type="entry name" value="LIPASE_GDXG_SER"/>
    <property type="match status" value="1"/>
</dbReference>